<geneLocation type="chloroplast"/>
<gene>
    <name evidence="1" type="primary">TIC214</name>
    <name type="synonym">ycf1</name>
</gene>
<comment type="function">
    <text evidence="1">Involved in protein precursor import into chloroplasts. May be part of an intermediate translocation complex acting as a protein-conducting channel at the inner envelope.</text>
</comment>
<comment type="subunit">
    <text evidence="1">Part of the Tic complex.</text>
</comment>
<comment type="subcellular location">
    <subcellularLocation>
        <location evidence="1">Plastid</location>
        <location evidence="1">Chloroplast inner membrane</location>
        <topology evidence="2">Multi-pass membrane protein</topology>
    </subcellularLocation>
</comment>
<comment type="similarity">
    <text evidence="4">Belongs to the TIC214 family.</text>
</comment>
<accession>Q49KU0</accession>
<protein>
    <recommendedName>
        <fullName evidence="1">Protein TIC 214</fullName>
    </recommendedName>
    <alternativeName>
        <fullName evidence="1">Translocon at the inner envelope membrane of chloroplasts 214</fullName>
        <shortName evidence="1">AtTIC214</shortName>
    </alternativeName>
</protein>
<reference key="1">
    <citation type="journal article" date="2005" name="DNA Res.">
        <title>Complete nucleotide sequence of the chloroplast genome from the Tasmanian blue gum, Eucalyptus globulus (Myrtaceae).</title>
        <authorList>
            <person name="Steane D.A."/>
        </authorList>
    </citation>
    <scope>NUCLEOTIDE SEQUENCE [LARGE SCALE GENOMIC DNA]</scope>
</reference>
<name>TI214_EUCGG</name>
<sequence>MILKSFLLGNPVSLCMNIINSVVMVGLYYGFLTTFSIGPSYLFLLRARVLEEGEEGTEKKVSATTGFIAGQLMMFISIYYAPLHLALGRPHTITVLALPYLLFHFFWNNHKHFFDYGSTTRNSMRNLSIQCVFLNNLIFQLFNHFILPSSMLARLVNIYMFRCNNKMLFVTSSFVGWLIGHIFFMKWVELVLVWIQQNNSIRSNKYIRSNKYLVSELRNSMARIFSILLFITCVYYLGRIPSPIVTKKFKETSETEERGEGEEETDVEIETTFETKGTRQEQEGSTEEDPSLFSEEKEDPDKIDEREEIRVNEKEKTRDEFNFQETFYKDSQVYKTSYMDRNKNKENSKLEIFKLKEDPFFLWFEKPLVTLLFDYKRWNRPLRYIKNNHFENAVRNEVSQYFFYICRNNGKERISFTYPPSLSTFLKMIERKISLLTKEKLPSDELYDHWIYTNDQKKNNLSKKFRNQMETVNKESITLDVFEKRTRLCNDENKKKYLPKIYDPFLNGPGRGRVKFFFSSQILNKMSIKNYIETGWINKIHSILFTTDQEKLEEKIDTFDKNSLSTEKKLSLFPFPETEQGRIHSEDQIKILKIFFNAVITEPKTKRIKKKSIGIKEISTKVPSWSYKLINDLEQQEGENEEMVAEDHEIRSRKTKHVLIFTDNDENTDANSKNTNNLDEADEVTFIRYSQQSDFRRDIIKGSMRAQRRKTVICELFQANVHSPLFLDRIGKPLFSFDISGMIKFILKKWMYKKTTELRISDYTQEKKKENEKKKEEDKREEYKRQEKARIEIAQTWDRVLFAQAIRGSLLVTQSFLRKYILFPSVIIAKNIARILLFQFPEWSEDLKDWNREMHVKCTYNGVQLSETEFPKNWLTDGIQIKILFPFYIKPWHRSKVPPRQKDRLRNKEQKNDFCFLTVWGMETEVPFGSPRKQRSFFEPIFKELRKKIIKLQKNPFLVIQVLKERINLFLNLSKERKKSVMKTILFLKGIIKELSKRNPIQLFGLRKIDELSETKKEKNGVISNGMINESSIQIRFMDLTDSSLTEKKMKDLDDRTSTIRNQIEKITKDNKKGFLTPEININISSNKISYPTKLLASIKNIWQKLKKFKRINVRLIRKSYSFFKFLIERIYINILICIINSPRITTQLFFDNSTKMIDKYIYNNETNKEKIAKTNKNTIRFIWTKKKSISDISKKNSKILLSSFSQAYVFYQLYQTQFCNLYKLRYVLQYHGTSFFLKNEIKDYFETQGIFYPELKHKNILNSEMIQWKNWLRGHYQYDLSPIRWYRLVPHKWRNRFNQTRLVQNKDLNKRHSDEKDRLILINYKKLNDFELNSLSNSKYNLQKYYGYDLFSYKSINYENKKDSHIYVSPLRLNNKQEISYNYNKIYKKGKLINMPGGIIPINLEDDDILNLXKFTDRKYLDWRIFDFCLRNKVNIESWIDIDTNGNKNTKTGFNNYQIIDKMDQKGIFFLKICQNGGIMASNKKKDLFDWMAMNEEILSRPISNLNLWFFPEFVILYNTYIMKPWIIPIQLLLLNFYENVSENKNITRKNKRDLFLFSNEKKSIELENRNQEEKESAIRDNLESDAQNQANLGSLFSNQEKDIGEDYASSDMKKRRKKKEYKSNTEVELYFFLKRYLRIQLRWDDSLNQRMINNIKIYCLLLRLINPREIAISSIQRGEMSLDILITQKDLTLTELMKKGILIIEPIRLSIKNDGQLIMYQSLNISLFHKSKPKINQIYREKSYVAKINLDKSIARHPKMAENRYKNDYDLLFVPEKVLSTKRRRELRIRICFNSRKRNGIHKNPVFCNNVKNWGEFLDKRKHFEKKKLIKLKFFLWPNYRLEDLSCMNRYWFDTNNGGRFTMIRIHMYPRLQIC</sequence>
<organism>
    <name type="scientific">Eucalyptus globulus subsp. globulus</name>
    <name type="common">Tasmanian blue gum</name>
    <dbReference type="NCBI Taxonomy" id="71271"/>
    <lineage>
        <taxon>Eukaryota</taxon>
        <taxon>Viridiplantae</taxon>
        <taxon>Streptophyta</taxon>
        <taxon>Embryophyta</taxon>
        <taxon>Tracheophyta</taxon>
        <taxon>Spermatophyta</taxon>
        <taxon>Magnoliopsida</taxon>
        <taxon>eudicotyledons</taxon>
        <taxon>Gunneridae</taxon>
        <taxon>Pentapetalae</taxon>
        <taxon>rosids</taxon>
        <taxon>malvids</taxon>
        <taxon>Myrtales</taxon>
        <taxon>Myrtaceae</taxon>
        <taxon>Myrtoideae</taxon>
        <taxon>Eucalypteae</taxon>
        <taxon>Eucalyptus</taxon>
    </lineage>
</organism>
<feature type="chain" id="PRO_0000262608" description="Protein TIC 214">
    <location>
        <begin position="1"/>
        <end position="1877"/>
    </location>
</feature>
<feature type="transmembrane region" description="Helical" evidence="2">
    <location>
        <begin position="18"/>
        <end position="38"/>
    </location>
</feature>
<feature type="transmembrane region" description="Helical" evidence="2">
    <location>
        <begin position="67"/>
        <end position="87"/>
    </location>
</feature>
<feature type="transmembrane region" description="Helical" evidence="2">
    <location>
        <begin position="90"/>
        <end position="110"/>
    </location>
</feature>
<feature type="transmembrane region" description="Helical" evidence="2">
    <location>
        <begin position="127"/>
        <end position="147"/>
    </location>
</feature>
<feature type="transmembrane region" description="Helical" evidence="2">
    <location>
        <begin position="175"/>
        <end position="195"/>
    </location>
</feature>
<feature type="transmembrane region" description="Helical" evidence="2">
    <location>
        <begin position="224"/>
        <end position="244"/>
    </location>
</feature>
<feature type="region of interest" description="Disordered" evidence="3">
    <location>
        <begin position="249"/>
        <end position="308"/>
    </location>
</feature>
<feature type="compositionally biased region" description="Basic and acidic residues" evidence="3">
    <location>
        <begin position="249"/>
        <end position="258"/>
    </location>
</feature>
<feature type="compositionally biased region" description="Acidic residues" evidence="3">
    <location>
        <begin position="259"/>
        <end position="271"/>
    </location>
</feature>
<feature type="compositionally biased region" description="Acidic residues" evidence="3">
    <location>
        <begin position="284"/>
        <end position="298"/>
    </location>
</feature>
<feature type="compositionally biased region" description="Basic and acidic residues" evidence="3">
    <location>
        <begin position="299"/>
        <end position="308"/>
    </location>
</feature>
<proteinExistence type="inferred from homology"/>
<evidence type="ECO:0000250" key="1">
    <source>
        <dbReference type="UniProtKB" id="P56785"/>
    </source>
</evidence>
<evidence type="ECO:0000255" key="2"/>
<evidence type="ECO:0000256" key="3">
    <source>
        <dbReference type="SAM" id="MobiDB-lite"/>
    </source>
</evidence>
<evidence type="ECO:0000305" key="4"/>
<keyword id="KW-0150">Chloroplast</keyword>
<keyword id="KW-0472">Membrane</keyword>
<keyword id="KW-0934">Plastid</keyword>
<keyword id="KW-1001">Plastid inner membrane</keyword>
<keyword id="KW-0653">Protein transport</keyword>
<keyword id="KW-0812">Transmembrane</keyword>
<keyword id="KW-1133">Transmembrane helix</keyword>
<keyword id="KW-0813">Transport</keyword>
<dbReference type="EMBL" id="AY780259">
    <property type="protein sequence ID" value="AAX21086.1"/>
    <property type="molecule type" value="Genomic_DNA"/>
</dbReference>
<dbReference type="RefSeq" id="YP_636357.1">
    <property type="nucleotide sequence ID" value="NC_008115.1"/>
</dbReference>
<dbReference type="GeneID" id="4108438"/>
<dbReference type="GO" id="GO:0009706">
    <property type="term" value="C:chloroplast inner membrane"/>
    <property type="evidence" value="ECO:0007669"/>
    <property type="project" value="UniProtKB-SubCell"/>
</dbReference>
<dbReference type="GO" id="GO:0015031">
    <property type="term" value="P:protein transport"/>
    <property type="evidence" value="ECO:0007669"/>
    <property type="project" value="UniProtKB-KW"/>
</dbReference>
<dbReference type="InterPro" id="IPR008896">
    <property type="entry name" value="TIC214"/>
</dbReference>
<dbReference type="PANTHER" id="PTHR33163:SF40">
    <property type="entry name" value="PROTEIN TIC 214"/>
    <property type="match status" value="1"/>
</dbReference>
<dbReference type="PANTHER" id="PTHR33163">
    <property type="entry name" value="PROTEIN TIC 214-RELATED"/>
    <property type="match status" value="1"/>
</dbReference>
<dbReference type="Pfam" id="PF05758">
    <property type="entry name" value="Ycf1"/>
    <property type="match status" value="1"/>
</dbReference>